<comment type="similarity">
    <text evidence="1">Belongs to the bacterial ribosomal protein bS21 family.</text>
</comment>
<keyword id="KW-1185">Reference proteome</keyword>
<keyword id="KW-0687">Ribonucleoprotein</keyword>
<keyword id="KW-0689">Ribosomal protein</keyword>
<gene>
    <name evidence="1" type="primary">rpsU</name>
    <name type="ordered locus">HPG27_521</name>
</gene>
<dbReference type="EMBL" id="CP001173">
    <property type="protein sequence ID" value="ACI27282.1"/>
    <property type="molecule type" value="Genomic_DNA"/>
</dbReference>
<dbReference type="RefSeq" id="WP_001117778.1">
    <property type="nucleotide sequence ID" value="NC_011333.1"/>
</dbReference>
<dbReference type="SMR" id="B5Z6T3"/>
<dbReference type="KEGG" id="hpg:HPG27_521"/>
<dbReference type="HOGENOM" id="CLU_159258_1_1_7"/>
<dbReference type="Proteomes" id="UP000001735">
    <property type="component" value="Chromosome"/>
</dbReference>
<dbReference type="GO" id="GO:1990904">
    <property type="term" value="C:ribonucleoprotein complex"/>
    <property type="evidence" value="ECO:0007669"/>
    <property type="project" value="UniProtKB-KW"/>
</dbReference>
<dbReference type="GO" id="GO:0005840">
    <property type="term" value="C:ribosome"/>
    <property type="evidence" value="ECO:0007669"/>
    <property type="project" value="UniProtKB-KW"/>
</dbReference>
<dbReference type="GO" id="GO:0003735">
    <property type="term" value="F:structural constituent of ribosome"/>
    <property type="evidence" value="ECO:0007669"/>
    <property type="project" value="InterPro"/>
</dbReference>
<dbReference type="GO" id="GO:0006412">
    <property type="term" value="P:translation"/>
    <property type="evidence" value="ECO:0007669"/>
    <property type="project" value="UniProtKB-UniRule"/>
</dbReference>
<dbReference type="Gene3D" id="1.20.5.1150">
    <property type="entry name" value="Ribosomal protein S8"/>
    <property type="match status" value="1"/>
</dbReference>
<dbReference type="HAMAP" id="MF_00358">
    <property type="entry name" value="Ribosomal_bS21"/>
    <property type="match status" value="1"/>
</dbReference>
<dbReference type="InterPro" id="IPR001911">
    <property type="entry name" value="Ribosomal_bS21"/>
</dbReference>
<dbReference type="InterPro" id="IPR018278">
    <property type="entry name" value="Ribosomal_bS21_CS"/>
</dbReference>
<dbReference type="InterPro" id="IPR038380">
    <property type="entry name" value="Ribosomal_bS21_sf"/>
</dbReference>
<dbReference type="NCBIfam" id="TIGR00030">
    <property type="entry name" value="S21p"/>
    <property type="match status" value="1"/>
</dbReference>
<dbReference type="Pfam" id="PF01165">
    <property type="entry name" value="Ribosomal_S21"/>
    <property type="match status" value="1"/>
</dbReference>
<dbReference type="PRINTS" id="PR00976">
    <property type="entry name" value="RIBOSOMALS21"/>
</dbReference>
<dbReference type="PROSITE" id="PS01181">
    <property type="entry name" value="RIBOSOMAL_S21"/>
    <property type="match status" value="1"/>
</dbReference>
<protein>
    <recommendedName>
        <fullName evidence="1">Small ribosomal subunit protein bS21</fullName>
    </recommendedName>
    <alternativeName>
        <fullName evidence="2">30S ribosomal protein S21</fullName>
    </alternativeName>
</protein>
<evidence type="ECO:0000255" key="1">
    <source>
        <dbReference type="HAMAP-Rule" id="MF_00358"/>
    </source>
</evidence>
<evidence type="ECO:0000305" key="2"/>
<reference key="1">
    <citation type="journal article" date="2009" name="J. Bacteriol.">
        <title>The complete genome sequence of Helicobacter pylori strain G27.</title>
        <authorList>
            <person name="Baltrus D.A."/>
            <person name="Amieva M.R."/>
            <person name="Covacci A."/>
            <person name="Lowe T.M."/>
            <person name="Merrell D.S."/>
            <person name="Ottemann K.M."/>
            <person name="Stein M."/>
            <person name="Salama N.R."/>
            <person name="Guillemin K."/>
        </authorList>
    </citation>
    <scope>NUCLEOTIDE SEQUENCE [LARGE SCALE GENOMIC DNA]</scope>
    <source>
        <strain>G27</strain>
    </source>
</reference>
<organism>
    <name type="scientific">Helicobacter pylori (strain G27)</name>
    <dbReference type="NCBI Taxonomy" id="563041"/>
    <lineage>
        <taxon>Bacteria</taxon>
        <taxon>Pseudomonadati</taxon>
        <taxon>Campylobacterota</taxon>
        <taxon>Epsilonproteobacteria</taxon>
        <taxon>Campylobacterales</taxon>
        <taxon>Helicobacteraceae</taxon>
        <taxon>Helicobacter</taxon>
    </lineage>
</organism>
<proteinExistence type="inferred from homology"/>
<feature type="chain" id="PRO_1000120627" description="Small ribosomal subunit protein bS21">
    <location>
        <begin position="1"/>
        <end position="70"/>
    </location>
</feature>
<accession>B5Z6T3</accession>
<sequence>MPGIKVREGDAFDEAYRRFKKQTDRNLVVTECRARRFFESKTEKRKKQKISAKKKVLKRLYMLRRYESRL</sequence>
<name>RS21_HELPG</name>